<accession>B7KSH0</accession>
<comment type="function">
    <text evidence="1">An essential GTPase which binds GTP, GDP and possibly (p)ppGpp with moderate affinity, with high nucleotide exchange rates and a fairly low GTP hydrolysis rate. Plays a role in control of the cell cycle, stress response, ribosome biogenesis and in those bacteria that undergo differentiation, in morphogenesis control.</text>
</comment>
<comment type="cofactor">
    <cofactor evidence="1">
        <name>Mg(2+)</name>
        <dbReference type="ChEBI" id="CHEBI:18420"/>
    </cofactor>
</comment>
<comment type="subunit">
    <text evidence="1">Monomer.</text>
</comment>
<comment type="subcellular location">
    <subcellularLocation>
        <location evidence="1">Cytoplasm</location>
    </subcellularLocation>
</comment>
<comment type="similarity">
    <text evidence="1">Belongs to the TRAFAC class OBG-HflX-like GTPase superfamily. OBG GTPase family.</text>
</comment>
<reference key="1">
    <citation type="submission" date="2008-12" db="EMBL/GenBank/DDBJ databases">
        <title>Complete sequence of chromosome of Methylobacterium chloromethanicum CM4.</title>
        <authorList>
            <consortium name="US DOE Joint Genome Institute"/>
            <person name="Lucas S."/>
            <person name="Copeland A."/>
            <person name="Lapidus A."/>
            <person name="Glavina del Rio T."/>
            <person name="Dalin E."/>
            <person name="Tice H."/>
            <person name="Bruce D."/>
            <person name="Goodwin L."/>
            <person name="Pitluck S."/>
            <person name="Chertkov O."/>
            <person name="Brettin T."/>
            <person name="Detter J.C."/>
            <person name="Han C."/>
            <person name="Larimer F."/>
            <person name="Land M."/>
            <person name="Hauser L."/>
            <person name="Kyrpides N."/>
            <person name="Mikhailova N."/>
            <person name="Marx C."/>
            <person name="Richardson P."/>
        </authorList>
    </citation>
    <scope>NUCLEOTIDE SEQUENCE [LARGE SCALE GENOMIC DNA]</scope>
    <source>
        <strain>CM4 / NCIMB 13688</strain>
    </source>
</reference>
<dbReference type="EC" id="3.6.5.-" evidence="1"/>
<dbReference type="EMBL" id="CP001298">
    <property type="protein sequence ID" value="ACK85638.1"/>
    <property type="molecule type" value="Genomic_DNA"/>
</dbReference>
<dbReference type="RefSeq" id="WP_003603086.1">
    <property type="nucleotide sequence ID" value="NC_011757.1"/>
</dbReference>
<dbReference type="SMR" id="B7KSH0"/>
<dbReference type="KEGG" id="mch:Mchl_4873"/>
<dbReference type="HOGENOM" id="CLU_011747_2_0_5"/>
<dbReference type="Proteomes" id="UP000002385">
    <property type="component" value="Chromosome"/>
</dbReference>
<dbReference type="GO" id="GO:0005737">
    <property type="term" value="C:cytoplasm"/>
    <property type="evidence" value="ECO:0007669"/>
    <property type="project" value="UniProtKB-SubCell"/>
</dbReference>
<dbReference type="GO" id="GO:0005525">
    <property type="term" value="F:GTP binding"/>
    <property type="evidence" value="ECO:0007669"/>
    <property type="project" value="UniProtKB-UniRule"/>
</dbReference>
<dbReference type="GO" id="GO:0003924">
    <property type="term" value="F:GTPase activity"/>
    <property type="evidence" value="ECO:0007669"/>
    <property type="project" value="UniProtKB-UniRule"/>
</dbReference>
<dbReference type="GO" id="GO:0000287">
    <property type="term" value="F:magnesium ion binding"/>
    <property type="evidence" value="ECO:0007669"/>
    <property type="project" value="InterPro"/>
</dbReference>
<dbReference type="GO" id="GO:0042254">
    <property type="term" value="P:ribosome biogenesis"/>
    <property type="evidence" value="ECO:0007669"/>
    <property type="project" value="UniProtKB-UniRule"/>
</dbReference>
<dbReference type="CDD" id="cd01898">
    <property type="entry name" value="Obg"/>
    <property type="match status" value="1"/>
</dbReference>
<dbReference type="FunFam" id="2.70.210.12:FF:000001">
    <property type="entry name" value="GTPase Obg"/>
    <property type="match status" value="1"/>
</dbReference>
<dbReference type="Gene3D" id="2.70.210.12">
    <property type="entry name" value="GTP1/OBG domain"/>
    <property type="match status" value="1"/>
</dbReference>
<dbReference type="Gene3D" id="3.40.50.300">
    <property type="entry name" value="P-loop containing nucleotide triphosphate hydrolases"/>
    <property type="match status" value="1"/>
</dbReference>
<dbReference type="HAMAP" id="MF_01454">
    <property type="entry name" value="GTPase_Obg"/>
    <property type="match status" value="1"/>
</dbReference>
<dbReference type="InterPro" id="IPR031167">
    <property type="entry name" value="G_OBG"/>
</dbReference>
<dbReference type="InterPro" id="IPR006073">
    <property type="entry name" value="GTP-bd"/>
</dbReference>
<dbReference type="InterPro" id="IPR014100">
    <property type="entry name" value="GTP-bd_Obg/CgtA"/>
</dbReference>
<dbReference type="InterPro" id="IPR006074">
    <property type="entry name" value="GTP1-OBG_CS"/>
</dbReference>
<dbReference type="InterPro" id="IPR006169">
    <property type="entry name" value="GTP1_OBG_dom"/>
</dbReference>
<dbReference type="InterPro" id="IPR036726">
    <property type="entry name" value="GTP1_OBG_dom_sf"/>
</dbReference>
<dbReference type="InterPro" id="IPR045086">
    <property type="entry name" value="OBG_GTPase"/>
</dbReference>
<dbReference type="InterPro" id="IPR027417">
    <property type="entry name" value="P-loop_NTPase"/>
</dbReference>
<dbReference type="NCBIfam" id="TIGR02729">
    <property type="entry name" value="Obg_CgtA"/>
    <property type="match status" value="1"/>
</dbReference>
<dbReference type="NCBIfam" id="NF008955">
    <property type="entry name" value="PRK12297.1"/>
    <property type="match status" value="1"/>
</dbReference>
<dbReference type="NCBIfam" id="NF008956">
    <property type="entry name" value="PRK12299.1"/>
    <property type="match status" value="1"/>
</dbReference>
<dbReference type="PANTHER" id="PTHR11702">
    <property type="entry name" value="DEVELOPMENTALLY REGULATED GTP-BINDING PROTEIN-RELATED"/>
    <property type="match status" value="1"/>
</dbReference>
<dbReference type="PANTHER" id="PTHR11702:SF31">
    <property type="entry name" value="MITOCHONDRIAL RIBOSOME-ASSOCIATED GTPASE 2"/>
    <property type="match status" value="1"/>
</dbReference>
<dbReference type="Pfam" id="PF01018">
    <property type="entry name" value="GTP1_OBG"/>
    <property type="match status" value="1"/>
</dbReference>
<dbReference type="Pfam" id="PF01926">
    <property type="entry name" value="MMR_HSR1"/>
    <property type="match status" value="1"/>
</dbReference>
<dbReference type="PIRSF" id="PIRSF002401">
    <property type="entry name" value="GTP_bd_Obg/CgtA"/>
    <property type="match status" value="1"/>
</dbReference>
<dbReference type="PRINTS" id="PR00326">
    <property type="entry name" value="GTP1OBG"/>
</dbReference>
<dbReference type="SUPFAM" id="SSF82051">
    <property type="entry name" value="Obg GTP-binding protein N-terminal domain"/>
    <property type="match status" value="1"/>
</dbReference>
<dbReference type="SUPFAM" id="SSF52540">
    <property type="entry name" value="P-loop containing nucleoside triphosphate hydrolases"/>
    <property type="match status" value="1"/>
</dbReference>
<dbReference type="PROSITE" id="PS51710">
    <property type="entry name" value="G_OBG"/>
    <property type="match status" value="1"/>
</dbReference>
<dbReference type="PROSITE" id="PS00905">
    <property type="entry name" value="GTP1_OBG"/>
    <property type="match status" value="1"/>
</dbReference>
<dbReference type="PROSITE" id="PS51883">
    <property type="entry name" value="OBG"/>
    <property type="match status" value="1"/>
</dbReference>
<gene>
    <name evidence="1" type="primary">obg</name>
    <name type="ordered locus">Mchl_4873</name>
</gene>
<name>OBG_METC4</name>
<protein>
    <recommendedName>
        <fullName evidence="1">GTPase Obg</fullName>
        <ecNumber evidence="1">3.6.5.-</ecNumber>
    </recommendedName>
    <alternativeName>
        <fullName evidence="1">GTP-binding protein Obg</fullName>
    </alternativeName>
</protein>
<sequence length="344" mass="36691">MKFLDEAKVYVRSGDGGPGCVSFRREKFIEFGGPNGGDGGRGGDVWIECVQGLNTLIDYRYRQHFKAKKGEHGMGSNCHGAKGDDAVLQVPAGTQVFAEDGETLIADMTEVGQRVRLAKGGNGGFGNAYFTTSTNRAPRHANPGLEGQEMWLILRLKLIADAGLVGLPNAGKSTFLATVTAAKPKIADYPFTTLHPGLGVVRSDEREFVLADIPGLIEGAHEGVGLGDRFLAHVERCRVLLHLVEGTSEHAGKAYKLVRRELEAYGEGLSDKPEIVALSKADALDADTLKQQLARLKRAAGGKPLVLSAASGQGVQEALRAIQAQLDTQGAEEAEAQPAEPWQP</sequence>
<keyword id="KW-0963">Cytoplasm</keyword>
<keyword id="KW-0342">GTP-binding</keyword>
<keyword id="KW-0378">Hydrolase</keyword>
<keyword id="KW-0460">Magnesium</keyword>
<keyword id="KW-0479">Metal-binding</keyword>
<keyword id="KW-0547">Nucleotide-binding</keyword>
<evidence type="ECO:0000255" key="1">
    <source>
        <dbReference type="HAMAP-Rule" id="MF_01454"/>
    </source>
</evidence>
<evidence type="ECO:0000255" key="2">
    <source>
        <dbReference type="PROSITE-ProRule" id="PRU01231"/>
    </source>
</evidence>
<organism>
    <name type="scientific">Methylorubrum extorquens (strain CM4 / NCIMB 13688)</name>
    <name type="common">Methylobacterium extorquens</name>
    <dbReference type="NCBI Taxonomy" id="440085"/>
    <lineage>
        <taxon>Bacteria</taxon>
        <taxon>Pseudomonadati</taxon>
        <taxon>Pseudomonadota</taxon>
        <taxon>Alphaproteobacteria</taxon>
        <taxon>Hyphomicrobiales</taxon>
        <taxon>Methylobacteriaceae</taxon>
        <taxon>Methylorubrum</taxon>
    </lineage>
</organism>
<feature type="chain" id="PRO_0000386039" description="GTPase Obg">
    <location>
        <begin position="1"/>
        <end position="344"/>
    </location>
</feature>
<feature type="domain" description="Obg" evidence="2">
    <location>
        <begin position="1"/>
        <end position="159"/>
    </location>
</feature>
<feature type="domain" description="OBG-type G" evidence="1">
    <location>
        <begin position="160"/>
        <end position="327"/>
    </location>
</feature>
<feature type="binding site" evidence="1">
    <location>
        <begin position="166"/>
        <end position="173"/>
    </location>
    <ligand>
        <name>GTP</name>
        <dbReference type="ChEBI" id="CHEBI:37565"/>
    </ligand>
</feature>
<feature type="binding site" evidence="1">
    <location>
        <position position="173"/>
    </location>
    <ligand>
        <name>Mg(2+)</name>
        <dbReference type="ChEBI" id="CHEBI:18420"/>
    </ligand>
</feature>
<feature type="binding site" evidence="1">
    <location>
        <begin position="191"/>
        <end position="195"/>
    </location>
    <ligand>
        <name>GTP</name>
        <dbReference type="ChEBI" id="CHEBI:37565"/>
    </ligand>
</feature>
<feature type="binding site" evidence="1">
    <location>
        <position position="193"/>
    </location>
    <ligand>
        <name>Mg(2+)</name>
        <dbReference type="ChEBI" id="CHEBI:18420"/>
    </ligand>
</feature>
<feature type="binding site" evidence="1">
    <location>
        <begin position="212"/>
        <end position="215"/>
    </location>
    <ligand>
        <name>GTP</name>
        <dbReference type="ChEBI" id="CHEBI:37565"/>
    </ligand>
</feature>
<feature type="binding site" evidence="1">
    <location>
        <begin position="279"/>
        <end position="282"/>
    </location>
    <ligand>
        <name>GTP</name>
        <dbReference type="ChEBI" id="CHEBI:37565"/>
    </ligand>
</feature>
<feature type="binding site" evidence="1">
    <location>
        <begin position="308"/>
        <end position="310"/>
    </location>
    <ligand>
        <name>GTP</name>
        <dbReference type="ChEBI" id="CHEBI:37565"/>
    </ligand>
</feature>
<proteinExistence type="inferred from homology"/>